<reference key="1">
    <citation type="journal article" date="2003" name="Proc. Natl. Acad. Sci. U.S.A.">
        <title>The complete genome sequence of Chromobacterium violaceum reveals remarkable and exploitable bacterial adaptability.</title>
        <authorList>
            <person name="Vasconcelos A.T.R."/>
            <person name="de Almeida D.F."/>
            <person name="Hungria M."/>
            <person name="Guimaraes C.T."/>
            <person name="Antonio R.V."/>
            <person name="Almeida F.C."/>
            <person name="de Almeida L.G.P."/>
            <person name="de Almeida R."/>
            <person name="Alves-Gomes J.A."/>
            <person name="Andrade E.M."/>
            <person name="Araripe J."/>
            <person name="de Araujo M.F.F."/>
            <person name="Astolfi-Filho S."/>
            <person name="Azevedo V."/>
            <person name="Baptista A.J."/>
            <person name="Bataus L.A.M."/>
            <person name="Batista J.S."/>
            <person name="Belo A."/>
            <person name="van den Berg C."/>
            <person name="Bogo M."/>
            <person name="Bonatto S."/>
            <person name="Bordignon J."/>
            <person name="Brigido M.M."/>
            <person name="Brito C.A."/>
            <person name="Brocchi M."/>
            <person name="Burity H.A."/>
            <person name="Camargo A.A."/>
            <person name="Cardoso D.D.P."/>
            <person name="Carneiro N.P."/>
            <person name="Carraro D.M."/>
            <person name="Carvalho C.M.B."/>
            <person name="Cascardo J.C.M."/>
            <person name="Cavada B.S."/>
            <person name="Chueire L.M.O."/>
            <person name="Creczynski-Pasa T.B."/>
            <person name="Cunha-Junior N.C."/>
            <person name="Fagundes N."/>
            <person name="Falcao C.L."/>
            <person name="Fantinatti F."/>
            <person name="Farias I.P."/>
            <person name="Felipe M.S.S."/>
            <person name="Ferrari L.P."/>
            <person name="Ferro J.A."/>
            <person name="Ferro M.I.T."/>
            <person name="Franco G.R."/>
            <person name="Freitas N.S.A."/>
            <person name="Furlan L.R."/>
            <person name="Gazzinelli R.T."/>
            <person name="Gomes E.A."/>
            <person name="Goncalves P.R."/>
            <person name="Grangeiro T.B."/>
            <person name="Grattapaglia D."/>
            <person name="Grisard E.C."/>
            <person name="Hanna E.S."/>
            <person name="Jardim S.N."/>
            <person name="Laurino J."/>
            <person name="Leoi L.C.T."/>
            <person name="Lima L.F.A."/>
            <person name="Loureiro M.F."/>
            <person name="Lyra M.C.C.P."/>
            <person name="Madeira H.M.F."/>
            <person name="Manfio G.P."/>
            <person name="Maranhao A.Q."/>
            <person name="Martins W.S."/>
            <person name="di Mauro S.M.Z."/>
            <person name="de Medeiros S.R.B."/>
            <person name="Meissner R.V."/>
            <person name="Moreira M.A.M."/>
            <person name="Nascimento F.F."/>
            <person name="Nicolas M.F."/>
            <person name="Oliveira J.G."/>
            <person name="Oliveira S.C."/>
            <person name="Paixao R.F.C."/>
            <person name="Parente J.A."/>
            <person name="Pedrosa F.O."/>
            <person name="Pena S.D.J."/>
            <person name="Pereira J.O."/>
            <person name="Pereira M."/>
            <person name="Pinto L.S.R.C."/>
            <person name="Pinto L.S."/>
            <person name="Porto J.I.R."/>
            <person name="Potrich D.P."/>
            <person name="Ramalho-Neto C.E."/>
            <person name="Reis A.M.M."/>
            <person name="Rigo L.U."/>
            <person name="Rondinelli E."/>
            <person name="Santos E.B.P."/>
            <person name="Santos F.R."/>
            <person name="Schneider M.P.C."/>
            <person name="Seuanez H.N."/>
            <person name="Silva A.M.R."/>
            <person name="da Silva A.L.C."/>
            <person name="Silva D.W."/>
            <person name="Silva R."/>
            <person name="Simoes I.C."/>
            <person name="Simon D."/>
            <person name="Soares C.M.A."/>
            <person name="Soares R.B.A."/>
            <person name="Souza E.M."/>
            <person name="Souza K.R.L."/>
            <person name="Souza R.C."/>
            <person name="Steffens M.B.R."/>
            <person name="Steindel M."/>
            <person name="Teixeira S.R."/>
            <person name="Urmenyi T."/>
            <person name="Vettore A."/>
            <person name="Wassem R."/>
            <person name="Zaha A."/>
            <person name="Simpson A.J.G."/>
        </authorList>
    </citation>
    <scope>NUCLEOTIDE SEQUENCE [LARGE SCALE GENOMIC DNA]</scope>
    <source>
        <strain>ATCC 12472 / DSM 30191 / JCM 1249 / CCUG 213 / NBRC 12614 / NCIMB 9131 / NCTC 9757 / MK</strain>
    </source>
</reference>
<organism>
    <name type="scientific">Chromobacterium violaceum (strain ATCC 12472 / DSM 30191 / JCM 1249 / CCUG 213 / NBRC 12614 / NCIMB 9131 / NCTC 9757 / MK)</name>
    <dbReference type="NCBI Taxonomy" id="243365"/>
    <lineage>
        <taxon>Bacteria</taxon>
        <taxon>Pseudomonadati</taxon>
        <taxon>Pseudomonadota</taxon>
        <taxon>Betaproteobacteria</taxon>
        <taxon>Neisseriales</taxon>
        <taxon>Chromobacteriaceae</taxon>
        <taxon>Chromobacterium</taxon>
    </lineage>
</organism>
<keyword id="KW-0131">Cell cycle</keyword>
<keyword id="KW-0132">Cell division</keyword>
<keyword id="KW-0997">Cell inner membrane</keyword>
<keyword id="KW-1003">Cell membrane</keyword>
<keyword id="KW-0133">Cell shape</keyword>
<keyword id="KW-0961">Cell wall biogenesis/degradation</keyword>
<keyword id="KW-0460">Magnesium</keyword>
<keyword id="KW-0472">Membrane</keyword>
<keyword id="KW-0479">Metal-binding</keyword>
<keyword id="KW-0573">Peptidoglycan synthesis</keyword>
<keyword id="KW-1185">Reference proteome</keyword>
<keyword id="KW-0808">Transferase</keyword>
<keyword id="KW-0812">Transmembrane</keyword>
<keyword id="KW-1133">Transmembrane helix</keyword>
<comment type="function">
    <text evidence="1">Catalyzes the initial step of the lipid cycle reactions in the biosynthesis of the cell wall peptidoglycan: transfers peptidoglycan precursor phospho-MurNAc-pentapeptide from UDP-MurNAc-pentapeptide onto the lipid carrier undecaprenyl phosphate, yielding undecaprenyl-pyrophosphoryl-MurNAc-pentapeptide, known as lipid I.</text>
</comment>
<comment type="catalytic activity">
    <reaction evidence="1">
        <text>UDP-N-acetyl-alpha-D-muramoyl-L-alanyl-gamma-D-glutamyl-meso-2,6-diaminopimeloyl-D-alanyl-D-alanine + di-trans,octa-cis-undecaprenyl phosphate = di-trans,octa-cis-undecaprenyl diphospho-N-acetyl-alpha-D-muramoyl-L-alanyl-D-glutamyl-meso-2,6-diaminopimeloyl-D-alanyl-D-alanine + UMP</text>
        <dbReference type="Rhea" id="RHEA:28386"/>
        <dbReference type="ChEBI" id="CHEBI:57865"/>
        <dbReference type="ChEBI" id="CHEBI:60392"/>
        <dbReference type="ChEBI" id="CHEBI:61386"/>
        <dbReference type="ChEBI" id="CHEBI:61387"/>
        <dbReference type="EC" id="2.7.8.13"/>
    </reaction>
</comment>
<comment type="cofactor">
    <cofactor evidence="1">
        <name>Mg(2+)</name>
        <dbReference type="ChEBI" id="CHEBI:18420"/>
    </cofactor>
</comment>
<comment type="pathway">
    <text evidence="1">Cell wall biogenesis; peptidoglycan biosynthesis.</text>
</comment>
<comment type="subcellular location">
    <subcellularLocation>
        <location evidence="1">Cell inner membrane</location>
        <topology evidence="1">Multi-pass membrane protein</topology>
    </subcellularLocation>
</comment>
<comment type="similarity">
    <text evidence="1">Belongs to the glycosyltransferase 4 family. MraY subfamily.</text>
</comment>
<gene>
    <name evidence="1" type="primary">mraY</name>
    <name type="ordered locus">CV_4346</name>
</gene>
<dbReference type="EC" id="2.7.8.13" evidence="1"/>
<dbReference type="EMBL" id="AE016825">
    <property type="protein sequence ID" value="AAQ62005.1"/>
    <property type="molecule type" value="Genomic_DNA"/>
</dbReference>
<dbReference type="RefSeq" id="WP_011137892.1">
    <property type="nucleotide sequence ID" value="NC_005085.1"/>
</dbReference>
<dbReference type="SMR" id="Q7NPZ6"/>
<dbReference type="STRING" id="243365.CV_4346"/>
<dbReference type="GeneID" id="66366171"/>
<dbReference type="KEGG" id="cvi:CV_4346"/>
<dbReference type="eggNOG" id="COG0472">
    <property type="taxonomic scope" value="Bacteria"/>
</dbReference>
<dbReference type="HOGENOM" id="CLU_023982_0_0_4"/>
<dbReference type="OrthoDB" id="9805475at2"/>
<dbReference type="UniPathway" id="UPA00219"/>
<dbReference type="Proteomes" id="UP000001424">
    <property type="component" value="Chromosome"/>
</dbReference>
<dbReference type="GO" id="GO:0005886">
    <property type="term" value="C:plasma membrane"/>
    <property type="evidence" value="ECO:0007669"/>
    <property type="project" value="UniProtKB-SubCell"/>
</dbReference>
<dbReference type="GO" id="GO:0046872">
    <property type="term" value="F:metal ion binding"/>
    <property type="evidence" value="ECO:0007669"/>
    <property type="project" value="UniProtKB-KW"/>
</dbReference>
<dbReference type="GO" id="GO:0008963">
    <property type="term" value="F:phospho-N-acetylmuramoyl-pentapeptide-transferase activity"/>
    <property type="evidence" value="ECO:0007669"/>
    <property type="project" value="UniProtKB-UniRule"/>
</dbReference>
<dbReference type="GO" id="GO:0051992">
    <property type="term" value="F:UDP-N-acetylmuramoyl-L-alanyl-D-glutamyl-meso-2,6-diaminopimelyl-D-alanyl-D-alanine:undecaprenyl-phosphate transferase activity"/>
    <property type="evidence" value="ECO:0007669"/>
    <property type="project" value="RHEA"/>
</dbReference>
<dbReference type="GO" id="GO:0051301">
    <property type="term" value="P:cell division"/>
    <property type="evidence" value="ECO:0007669"/>
    <property type="project" value="UniProtKB-KW"/>
</dbReference>
<dbReference type="GO" id="GO:0071555">
    <property type="term" value="P:cell wall organization"/>
    <property type="evidence" value="ECO:0007669"/>
    <property type="project" value="UniProtKB-KW"/>
</dbReference>
<dbReference type="GO" id="GO:0009252">
    <property type="term" value="P:peptidoglycan biosynthetic process"/>
    <property type="evidence" value="ECO:0007669"/>
    <property type="project" value="UniProtKB-UniRule"/>
</dbReference>
<dbReference type="GO" id="GO:0008360">
    <property type="term" value="P:regulation of cell shape"/>
    <property type="evidence" value="ECO:0007669"/>
    <property type="project" value="UniProtKB-KW"/>
</dbReference>
<dbReference type="CDD" id="cd06852">
    <property type="entry name" value="GT_MraY"/>
    <property type="match status" value="1"/>
</dbReference>
<dbReference type="HAMAP" id="MF_00038">
    <property type="entry name" value="MraY"/>
    <property type="match status" value="1"/>
</dbReference>
<dbReference type="InterPro" id="IPR000715">
    <property type="entry name" value="Glycosyl_transferase_4"/>
</dbReference>
<dbReference type="InterPro" id="IPR003524">
    <property type="entry name" value="PNAcMuramoyl-5peptid_Trfase"/>
</dbReference>
<dbReference type="InterPro" id="IPR018480">
    <property type="entry name" value="PNAcMuramoyl-5peptid_Trfase_CS"/>
</dbReference>
<dbReference type="NCBIfam" id="TIGR00445">
    <property type="entry name" value="mraY"/>
    <property type="match status" value="1"/>
</dbReference>
<dbReference type="PANTHER" id="PTHR22926">
    <property type="entry name" value="PHOSPHO-N-ACETYLMURAMOYL-PENTAPEPTIDE-TRANSFERASE"/>
    <property type="match status" value="1"/>
</dbReference>
<dbReference type="PANTHER" id="PTHR22926:SF5">
    <property type="entry name" value="PHOSPHO-N-ACETYLMURAMOYL-PENTAPEPTIDE-TRANSFERASE HOMOLOG"/>
    <property type="match status" value="1"/>
</dbReference>
<dbReference type="Pfam" id="PF00953">
    <property type="entry name" value="Glycos_transf_4"/>
    <property type="match status" value="1"/>
</dbReference>
<dbReference type="PROSITE" id="PS01347">
    <property type="entry name" value="MRAY_1"/>
    <property type="match status" value="1"/>
</dbReference>
<dbReference type="PROSITE" id="PS01348">
    <property type="entry name" value="MRAY_2"/>
    <property type="match status" value="1"/>
</dbReference>
<sequence>MLLWLADLLGSHIRAFNVFNYTTLRAVMAALTALTISLLLGPWVIRKLTELKVGQAVRNDGPQTHLVKAGTPTMGGSLILLAITLTTLLWADLSNKYVWLLLAVMLGTGALGFYDDWRKVVYKDPKGVSAKFKMAWQSAIAIGAGVFLIATAKLPASTELIVPFFKTVAYPLGAVGFCVLTYFVIVGTSNAVNLTDGLDGLAALPTVLVSAGLAIFAYVAGHAVFSKYLGLPFIPGAHEVVVFCAAMCGACLGFLWFNAYPAQVFMGDVGALALGAALGTVAVIVRQEIVLFLMGGLFVMEALSVMIQVTSFKLTGKRVFRMAPLHHHFELKGWKETQVVVRFWIVTMMLVLIGLSTLKLR</sequence>
<proteinExistence type="inferred from homology"/>
<feature type="chain" id="PRO_0000108809" description="Phospho-N-acetylmuramoyl-pentapeptide-transferase">
    <location>
        <begin position="1"/>
        <end position="361"/>
    </location>
</feature>
<feature type="transmembrane region" description="Helical" evidence="1">
    <location>
        <begin position="25"/>
        <end position="45"/>
    </location>
</feature>
<feature type="transmembrane region" description="Helical" evidence="1">
    <location>
        <begin position="73"/>
        <end position="93"/>
    </location>
</feature>
<feature type="transmembrane region" description="Helical" evidence="1">
    <location>
        <begin position="97"/>
        <end position="117"/>
    </location>
</feature>
<feature type="transmembrane region" description="Helical" evidence="1">
    <location>
        <begin position="132"/>
        <end position="152"/>
    </location>
</feature>
<feature type="transmembrane region" description="Helical" evidence="1">
    <location>
        <begin position="167"/>
        <end position="187"/>
    </location>
</feature>
<feature type="transmembrane region" description="Helical" evidence="1">
    <location>
        <begin position="200"/>
        <end position="220"/>
    </location>
</feature>
<feature type="transmembrane region" description="Helical" evidence="1">
    <location>
        <begin position="240"/>
        <end position="260"/>
    </location>
</feature>
<feature type="transmembrane region" description="Helical" evidence="1">
    <location>
        <begin position="264"/>
        <end position="284"/>
    </location>
</feature>
<feature type="transmembrane region" description="Helical" evidence="1">
    <location>
        <begin position="289"/>
        <end position="309"/>
    </location>
</feature>
<feature type="transmembrane region" description="Helical" evidence="1">
    <location>
        <begin position="338"/>
        <end position="358"/>
    </location>
</feature>
<evidence type="ECO:0000255" key="1">
    <source>
        <dbReference type="HAMAP-Rule" id="MF_00038"/>
    </source>
</evidence>
<protein>
    <recommendedName>
        <fullName evidence="1">Phospho-N-acetylmuramoyl-pentapeptide-transferase</fullName>
        <ecNumber evidence="1">2.7.8.13</ecNumber>
    </recommendedName>
    <alternativeName>
        <fullName evidence="1">UDP-MurNAc-pentapeptide phosphotransferase</fullName>
    </alternativeName>
</protein>
<name>MRAY_CHRVO</name>
<accession>Q7NPZ6</accession>